<accession>B8EPC0</accession>
<name>GATB_METSB</name>
<comment type="function">
    <text evidence="1">Allows the formation of correctly charged Asn-tRNA(Asn) or Gln-tRNA(Gln) through the transamidation of misacylated Asp-tRNA(Asn) or Glu-tRNA(Gln) in organisms which lack either or both of asparaginyl-tRNA or glutaminyl-tRNA synthetases. The reaction takes place in the presence of glutamine and ATP through an activated phospho-Asp-tRNA(Asn) or phospho-Glu-tRNA(Gln).</text>
</comment>
<comment type="catalytic activity">
    <reaction evidence="1">
        <text>L-glutamyl-tRNA(Gln) + L-glutamine + ATP + H2O = L-glutaminyl-tRNA(Gln) + L-glutamate + ADP + phosphate + H(+)</text>
        <dbReference type="Rhea" id="RHEA:17521"/>
        <dbReference type="Rhea" id="RHEA-COMP:9681"/>
        <dbReference type="Rhea" id="RHEA-COMP:9684"/>
        <dbReference type="ChEBI" id="CHEBI:15377"/>
        <dbReference type="ChEBI" id="CHEBI:15378"/>
        <dbReference type="ChEBI" id="CHEBI:29985"/>
        <dbReference type="ChEBI" id="CHEBI:30616"/>
        <dbReference type="ChEBI" id="CHEBI:43474"/>
        <dbReference type="ChEBI" id="CHEBI:58359"/>
        <dbReference type="ChEBI" id="CHEBI:78520"/>
        <dbReference type="ChEBI" id="CHEBI:78521"/>
        <dbReference type="ChEBI" id="CHEBI:456216"/>
    </reaction>
</comment>
<comment type="catalytic activity">
    <reaction evidence="1">
        <text>L-aspartyl-tRNA(Asn) + L-glutamine + ATP + H2O = L-asparaginyl-tRNA(Asn) + L-glutamate + ADP + phosphate + 2 H(+)</text>
        <dbReference type="Rhea" id="RHEA:14513"/>
        <dbReference type="Rhea" id="RHEA-COMP:9674"/>
        <dbReference type="Rhea" id="RHEA-COMP:9677"/>
        <dbReference type="ChEBI" id="CHEBI:15377"/>
        <dbReference type="ChEBI" id="CHEBI:15378"/>
        <dbReference type="ChEBI" id="CHEBI:29985"/>
        <dbReference type="ChEBI" id="CHEBI:30616"/>
        <dbReference type="ChEBI" id="CHEBI:43474"/>
        <dbReference type="ChEBI" id="CHEBI:58359"/>
        <dbReference type="ChEBI" id="CHEBI:78515"/>
        <dbReference type="ChEBI" id="CHEBI:78516"/>
        <dbReference type="ChEBI" id="CHEBI:456216"/>
    </reaction>
</comment>
<comment type="subunit">
    <text evidence="1">Heterotrimer of A, B and C subunits.</text>
</comment>
<comment type="similarity">
    <text evidence="1">Belongs to the GatB/GatE family. GatB subfamily.</text>
</comment>
<dbReference type="EC" id="6.3.5.-" evidence="1"/>
<dbReference type="EMBL" id="CP001280">
    <property type="protein sequence ID" value="ACK49708.1"/>
    <property type="molecule type" value="Genomic_DNA"/>
</dbReference>
<dbReference type="RefSeq" id="WP_012589778.1">
    <property type="nucleotide sequence ID" value="NC_011666.1"/>
</dbReference>
<dbReference type="SMR" id="B8EPC0"/>
<dbReference type="STRING" id="395965.Msil_0737"/>
<dbReference type="KEGG" id="msl:Msil_0737"/>
<dbReference type="eggNOG" id="COG0064">
    <property type="taxonomic scope" value="Bacteria"/>
</dbReference>
<dbReference type="HOGENOM" id="CLU_019240_0_0_5"/>
<dbReference type="OrthoDB" id="9804078at2"/>
<dbReference type="Proteomes" id="UP000002257">
    <property type="component" value="Chromosome"/>
</dbReference>
<dbReference type="GO" id="GO:0050566">
    <property type="term" value="F:asparaginyl-tRNA synthase (glutamine-hydrolyzing) activity"/>
    <property type="evidence" value="ECO:0007669"/>
    <property type="project" value="RHEA"/>
</dbReference>
<dbReference type="GO" id="GO:0005524">
    <property type="term" value="F:ATP binding"/>
    <property type="evidence" value="ECO:0007669"/>
    <property type="project" value="UniProtKB-KW"/>
</dbReference>
<dbReference type="GO" id="GO:0050567">
    <property type="term" value="F:glutaminyl-tRNA synthase (glutamine-hydrolyzing) activity"/>
    <property type="evidence" value="ECO:0007669"/>
    <property type="project" value="UniProtKB-UniRule"/>
</dbReference>
<dbReference type="GO" id="GO:0070681">
    <property type="term" value="P:glutaminyl-tRNAGln biosynthesis via transamidation"/>
    <property type="evidence" value="ECO:0007669"/>
    <property type="project" value="TreeGrafter"/>
</dbReference>
<dbReference type="GO" id="GO:0006412">
    <property type="term" value="P:translation"/>
    <property type="evidence" value="ECO:0007669"/>
    <property type="project" value="UniProtKB-UniRule"/>
</dbReference>
<dbReference type="FunFam" id="1.10.10.410:FF:000001">
    <property type="entry name" value="Aspartyl/glutamyl-tRNA(Asn/Gln) amidotransferase subunit B"/>
    <property type="match status" value="1"/>
</dbReference>
<dbReference type="FunFam" id="1.10.150.380:FF:000001">
    <property type="entry name" value="Aspartyl/glutamyl-tRNA(Asn/Gln) amidotransferase subunit B"/>
    <property type="match status" value="1"/>
</dbReference>
<dbReference type="Gene3D" id="1.10.10.410">
    <property type="match status" value="1"/>
</dbReference>
<dbReference type="Gene3D" id="1.10.150.380">
    <property type="entry name" value="GatB domain, N-terminal subdomain"/>
    <property type="match status" value="1"/>
</dbReference>
<dbReference type="HAMAP" id="MF_00121">
    <property type="entry name" value="GatB"/>
    <property type="match status" value="1"/>
</dbReference>
<dbReference type="InterPro" id="IPR017959">
    <property type="entry name" value="Asn/Gln-tRNA_amidoTrfase_suB/E"/>
</dbReference>
<dbReference type="InterPro" id="IPR006075">
    <property type="entry name" value="Asn/Gln-tRNA_Trfase_suB/E_cat"/>
</dbReference>
<dbReference type="InterPro" id="IPR018027">
    <property type="entry name" value="Asn/Gln_amidotransferase"/>
</dbReference>
<dbReference type="InterPro" id="IPR003789">
    <property type="entry name" value="Asn/Gln_tRNA_amidoTrase-B-like"/>
</dbReference>
<dbReference type="InterPro" id="IPR004413">
    <property type="entry name" value="GatB"/>
</dbReference>
<dbReference type="InterPro" id="IPR042114">
    <property type="entry name" value="GatB_C_1"/>
</dbReference>
<dbReference type="InterPro" id="IPR023168">
    <property type="entry name" value="GatB_Yqey_C_2"/>
</dbReference>
<dbReference type="InterPro" id="IPR017958">
    <property type="entry name" value="Gln-tRNA_amidoTrfase_suB_CS"/>
</dbReference>
<dbReference type="InterPro" id="IPR014746">
    <property type="entry name" value="Gln_synth/guanido_kin_cat_dom"/>
</dbReference>
<dbReference type="NCBIfam" id="TIGR00133">
    <property type="entry name" value="gatB"/>
    <property type="match status" value="1"/>
</dbReference>
<dbReference type="NCBIfam" id="NF004012">
    <property type="entry name" value="PRK05477.1-2"/>
    <property type="match status" value="1"/>
</dbReference>
<dbReference type="NCBIfam" id="NF004014">
    <property type="entry name" value="PRK05477.1-4"/>
    <property type="match status" value="1"/>
</dbReference>
<dbReference type="NCBIfam" id="NF004015">
    <property type="entry name" value="PRK05477.1-5"/>
    <property type="match status" value="1"/>
</dbReference>
<dbReference type="PANTHER" id="PTHR11659">
    <property type="entry name" value="GLUTAMYL-TRNA GLN AMIDOTRANSFERASE SUBUNIT B MITOCHONDRIAL AND PROKARYOTIC PET112-RELATED"/>
    <property type="match status" value="1"/>
</dbReference>
<dbReference type="PANTHER" id="PTHR11659:SF0">
    <property type="entry name" value="GLUTAMYL-TRNA(GLN) AMIDOTRANSFERASE SUBUNIT B, MITOCHONDRIAL"/>
    <property type="match status" value="1"/>
</dbReference>
<dbReference type="Pfam" id="PF02934">
    <property type="entry name" value="GatB_N"/>
    <property type="match status" value="1"/>
</dbReference>
<dbReference type="Pfam" id="PF02637">
    <property type="entry name" value="GatB_Yqey"/>
    <property type="match status" value="1"/>
</dbReference>
<dbReference type="SMART" id="SM00845">
    <property type="entry name" value="GatB_Yqey"/>
    <property type="match status" value="1"/>
</dbReference>
<dbReference type="SUPFAM" id="SSF89095">
    <property type="entry name" value="GatB/YqeY motif"/>
    <property type="match status" value="1"/>
</dbReference>
<dbReference type="SUPFAM" id="SSF55931">
    <property type="entry name" value="Glutamine synthetase/guanido kinase"/>
    <property type="match status" value="1"/>
</dbReference>
<dbReference type="PROSITE" id="PS01234">
    <property type="entry name" value="GATB"/>
    <property type="match status" value="1"/>
</dbReference>
<proteinExistence type="inferred from homology"/>
<evidence type="ECO:0000255" key="1">
    <source>
        <dbReference type="HAMAP-Rule" id="MF_00121"/>
    </source>
</evidence>
<reference key="1">
    <citation type="journal article" date="2010" name="J. Bacteriol.">
        <title>Complete genome sequence of the aerobic facultative methanotroph Methylocella silvestris BL2.</title>
        <authorList>
            <person name="Chen Y."/>
            <person name="Crombie A."/>
            <person name="Rahman M.T."/>
            <person name="Dedysh S.N."/>
            <person name="Liesack W."/>
            <person name="Stott M.B."/>
            <person name="Alam M."/>
            <person name="Theisen A.R."/>
            <person name="Murrell J.C."/>
            <person name="Dunfield P.F."/>
        </authorList>
    </citation>
    <scope>NUCLEOTIDE SEQUENCE [LARGE SCALE GENOMIC DNA]</scope>
    <source>
        <strain>DSM 15510 / CIP 108128 / LMG 27833 / NCIMB 13906 / BL2</strain>
    </source>
</reference>
<feature type="chain" id="PRO_1000122527" description="Aspartyl/glutamyl-tRNA(Asn/Gln) amidotransferase subunit B">
    <location>
        <begin position="1"/>
        <end position="495"/>
    </location>
</feature>
<sequence>MTTRAKPSKLIKGATGDFEIVIGMEIHAQVTSRSKLFSGASTEFGGEPNAHVSLVDAAMPGMLPVINQECVAQAVRTGLGLEAQINLRSVFDRKNYFYPDLPQGYQISQYKSPIVGEGVVAVDVSPTEQIKVGIERLHLEQDAGKSLHDQSATESLVDLNRSGVALMEIVSKPDMRSSDEARAYVTKLRTILRYIGSCDGNMEQGSLRADVNVSVRRPGEPLGTRCEIKNVNSIRFIGQAIEVEARRQIGVIEDGGVVQQETRLFDPGRGETRSMRSKEEAHDYRYFPDPDLLPLEFDQAYVDGLKAGLPELPDAKKERFIAEYGLPAYDAGVLVADKETADYYEAAVRHGGAKRDPKLVANWLTGDVAAYANSVGLSVAQTHIKPGQIASLVDLIADGTISGKIAKDVLSILIAEEKDADPKDIVEARGLRQVTDTGAIAAAVDAIIKANPDKVAQAQAKPSMLGWFVGQVMKQTGGKANPQAVNDELKAKLGI</sequence>
<gene>
    <name evidence="1" type="primary">gatB</name>
    <name type="ordered locus">Msil_0737</name>
</gene>
<organism>
    <name type="scientific">Methylocella silvestris (strain DSM 15510 / CIP 108128 / LMG 27833 / NCIMB 13906 / BL2)</name>
    <dbReference type="NCBI Taxonomy" id="395965"/>
    <lineage>
        <taxon>Bacteria</taxon>
        <taxon>Pseudomonadati</taxon>
        <taxon>Pseudomonadota</taxon>
        <taxon>Alphaproteobacteria</taxon>
        <taxon>Hyphomicrobiales</taxon>
        <taxon>Beijerinckiaceae</taxon>
        <taxon>Methylocella</taxon>
    </lineage>
</organism>
<protein>
    <recommendedName>
        <fullName evidence="1">Aspartyl/glutamyl-tRNA(Asn/Gln) amidotransferase subunit B</fullName>
        <shortName evidence="1">Asp/Glu-ADT subunit B</shortName>
        <ecNumber evidence="1">6.3.5.-</ecNumber>
    </recommendedName>
</protein>
<keyword id="KW-0067">ATP-binding</keyword>
<keyword id="KW-0436">Ligase</keyword>
<keyword id="KW-0547">Nucleotide-binding</keyword>
<keyword id="KW-0648">Protein biosynthesis</keyword>
<keyword id="KW-1185">Reference proteome</keyword>